<proteinExistence type="predicted"/>
<reference key="1">
    <citation type="submission" date="1997-04" db="EMBL/GenBank/DDBJ databases">
        <authorList>
            <person name="Denizot F."/>
        </authorList>
    </citation>
    <scope>NUCLEOTIDE SEQUENCE [GENOMIC DNA]</scope>
    <source>
        <strain>168</strain>
    </source>
</reference>
<reference key="2">
    <citation type="journal article" date="1997" name="Nature">
        <title>The complete genome sequence of the Gram-positive bacterium Bacillus subtilis.</title>
        <authorList>
            <person name="Kunst F."/>
            <person name="Ogasawara N."/>
            <person name="Moszer I."/>
            <person name="Albertini A.M."/>
            <person name="Alloni G."/>
            <person name="Azevedo V."/>
            <person name="Bertero M.G."/>
            <person name="Bessieres P."/>
            <person name="Bolotin A."/>
            <person name="Borchert S."/>
            <person name="Borriss R."/>
            <person name="Boursier L."/>
            <person name="Brans A."/>
            <person name="Braun M."/>
            <person name="Brignell S.C."/>
            <person name="Bron S."/>
            <person name="Brouillet S."/>
            <person name="Bruschi C.V."/>
            <person name="Caldwell B."/>
            <person name="Capuano V."/>
            <person name="Carter N.M."/>
            <person name="Choi S.-K."/>
            <person name="Codani J.-J."/>
            <person name="Connerton I.F."/>
            <person name="Cummings N.J."/>
            <person name="Daniel R.A."/>
            <person name="Denizot F."/>
            <person name="Devine K.M."/>
            <person name="Duesterhoeft A."/>
            <person name="Ehrlich S.D."/>
            <person name="Emmerson P.T."/>
            <person name="Entian K.-D."/>
            <person name="Errington J."/>
            <person name="Fabret C."/>
            <person name="Ferrari E."/>
            <person name="Foulger D."/>
            <person name="Fritz C."/>
            <person name="Fujita M."/>
            <person name="Fujita Y."/>
            <person name="Fuma S."/>
            <person name="Galizzi A."/>
            <person name="Galleron N."/>
            <person name="Ghim S.-Y."/>
            <person name="Glaser P."/>
            <person name="Goffeau A."/>
            <person name="Golightly E.J."/>
            <person name="Grandi G."/>
            <person name="Guiseppi G."/>
            <person name="Guy B.J."/>
            <person name="Haga K."/>
            <person name="Haiech J."/>
            <person name="Harwood C.R."/>
            <person name="Henaut A."/>
            <person name="Hilbert H."/>
            <person name="Holsappel S."/>
            <person name="Hosono S."/>
            <person name="Hullo M.-F."/>
            <person name="Itaya M."/>
            <person name="Jones L.-M."/>
            <person name="Joris B."/>
            <person name="Karamata D."/>
            <person name="Kasahara Y."/>
            <person name="Klaerr-Blanchard M."/>
            <person name="Klein C."/>
            <person name="Kobayashi Y."/>
            <person name="Koetter P."/>
            <person name="Koningstein G."/>
            <person name="Krogh S."/>
            <person name="Kumano M."/>
            <person name="Kurita K."/>
            <person name="Lapidus A."/>
            <person name="Lardinois S."/>
            <person name="Lauber J."/>
            <person name="Lazarevic V."/>
            <person name="Lee S.-M."/>
            <person name="Levine A."/>
            <person name="Liu H."/>
            <person name="Masuda S."/>
            <person name="Mauel C."/>
            <person name="Medigue C."/>
            <person name="Medina N."/>
            <person name="Mellado R.P."/>
            <person name="Mizuno M."/>
            <person name="Moestl D."/>
            <person name="Nakai S."/>
            <person name="Noback M."/>
            <person name="Noone D."/>
            <person name="O'Reilly M."/>
            <person name="Ogawa K."/>
            <person name="Ogiwara A."/>
            <person name="Oudega B."/>
            <person name="Park S.-H."/>
            <person name="Parro V."/>
            <person name="Pohl T.M."/>
            <person name="Portetelle D."/>
            <person name="Porwollik S."/>
            <person name="Prescott A.M."/>
            <person name="Presecan E."/>
            <person name="Pujic P."/>
            <person name="Purnelle B."/>
            <person name="Rapoport G."/>
            <person name="Rey M."/>
            <person name="Reynolds S."/>
            <person name="Rieger M."/>
            <person name="Rivolta C."/>
            <person name="Rocha E."/>
            <person name="Roche B."/>
            <person name="Rose M."/>
            <person name="Sadaie Y."/>
            <person name="Sato T."/>
            <person name="Scanlan E."/>
            <person name="Schleich S."/>
            <person name="Schroeter R."/>
            <person name="Scoffone F."/>
            <person name="Sekiguchi J."/>
            <person name="Sekowska A."/>
            <person name="Seror S.J."/>
            <person name="Serror P."/>
            <person name="Shin B.-S."/>
            <person name="Soldo B."/>
            <person name="Sorokin A."/>
            <person name="Tacconi E."/>
            <person name="Takagi T."/>
            <person name="Takahashi H."/>
            <person name="Takemaru K."/>
            <person name="Takeuchi M."/>
            <person name="Tamakoshi A."/>
            <person name="Tanaka T."/>
            <person name="Terpstra P."/>
            <person name="Tognoni A."/>
            <person name="Tosato V."/>
            <person name="Uchiyama S."/>
            <person name="Vandenbol M."/>
            <person name="Vannier F."/>
            <person name="Vassarotti A."/>
            <person name="Viari A."/>
            <person name="Wambutt R."/>
            <person name="Wedler E."/>
            <person name="Wedler H."/>
            <person name="Weitzenegger T."/>
            <person name="Winters P."/>
            <person name="Wipat A."/>
            <person name="Yamamoto H."/>
            <person name="Yamane K."/>
            <person name="Yasumoto K."/>
            <person name="Yata K."/>
            <person name="Yoshida K."/>
            <person name="Yoshikawa H.-F."/>
            <person name="Zumstein E."/>
            <person name="Yoshikawa H."/>
            <person name="Danchin A."/>
        </authorList>
    </citation>
    <scope>NUCLEOTIDE SEQUENCE [LARGE SCALE GENOMIC DNA]</scope>
    <source>
        <strain>168</strain>
    </source>
</reference>
<keyword id="KW-1185">Reference proteome</keyword>
<organism>
    <name type="scientific">Bacillus subtilis (strain 168)</name>
    <dbReference type="NCBI Taxonomy" id="224308"/>
    <lineage>
        <taxon>Bacteria</taxon>
        <taxon>Bacillati</taxon>
        <taxon>Bacillota</taxon>
        <taxon>Bacilli</taxon>
        <taxon>Bacillales</taxon>
        <taxon>Bacillaceae</taxon>
        <taxon>Bacillus</taxon>
    </lineage>
</organism>
<feature type="chain" id="PRO_0000360748" description="Uncharacterized protein YvdQ">
    <location>
        <begin position="1"/>
        <end position="170"/>
    </location>
</feature>
<gene>
    <name type="primary">yvdQ</name>
    <name type="ordered locus">BSU34510</name>
</gene>
<protein>
    <recommendedName>
        <fullName>Uncharacterized protein YvdQ</fullName>
    </recommendedName>
</protein>
<dbReference type="EMBL" id="Z94043">
    <property type="protein sequence ID" value="CAB08046.1"/>
    <property type="molecule type" value="Genomic_DNA"/>
</dbReference>
<dbReference type="EMBL" id="AL009126">
    <property type="protein sequence ID" value="CAB15456.1"/>
    <property type="molecule type" value="Genomic_DNA"/>
</dbReference>
<dbReference type="PIR" id="H70034">
    <property type="entry name" value="H70034"/>
</dbReference>
<dbReference type="RefSeq" id="NP_391331.1">
    <property type="nucleotide sequence ID" value="NC_000964.3"/>
</dbReference>
<dbReference type="RefSeq" id="WP_003243249.1">
    <property type="nucleotide sequence ID" value="NZ_OZ025638.1"/>
</dbReference>
<dbReference type="SMR" id="O06998"/>
<dbReference type="FunCoup" id="O06998">
    <property type="interactions" value="88"/>
</dbReference>
<dbReference type="STRING" id="224308.BSU34510"/>
<dbReference type="PaxDb" id="224308-BSU34510"/>
<dbReference type="EnsemblBacteria" id="CAB15456">
    <property type="protein sequence ID" value="CAB15456"/>
    <property type="gene ID" value="BSU_34510"/>
</dbReference>
<dbReference type="GeneID" id="936432"/>
<dbReference type="KEGG" id="bsu:BSU34510"/>
<dbReference type="PATRIC" id="fig|224308.179.peg.3738"/>
<dbReference type="eggNOG" id="ENOG502ZBP3">
    <property type="taxonomic scope" value="Bacteria"/>
</dbReference>
<dbReference type="InParanoid" id="O06998"/>
<dbReference type="OrthoDB" id="1934429at2"/>
<dbReference type="BioCyc" id="BSUB:BSU34510-MONOMER"/>
<dbReference type="Proteomes" id="UP000001570">
    <property type="component" value="Chromosome"/>
</dbReference>
<dbReference type="Gene3D" id="1.20.1260.10">
    <property type="match status" value="1"/>
</dbReference>
<dbReference type="InterPro" id="IPR021617">
    <property type="entry name" value="DUF3231"/>
</dbReference>
<dbReference type="InterPro" id="IPR012347">
    <property type="entry name" value="Ferritin-like"/>
</dbReference>
<dbReference type="Pfam" id="PF11553">
    <property type="entry name" value="DUF3231"/>
    <property type="match status" value="1"/>
</dbReference>
<accession>O06998</accession>
<accession>Q795H4</accession>
<name>YVDQ_BACSU</name>
<sequence length="170" mass="18580">MGILSGNPQDEPMHYGEVFGLWSYVMAGNKMVGNYQMLLNHVGDDDLKKLLRESIEKCQDEIKQVSTILKENGVALPPASPEPPTADLNDIPPGARFLDPDVAASAAAENAAGLVTCSKMMGQSIREDIAMMFGQFHMSKAATGAKYLRLLKNKGWLIPPPLHLQKHHEA</sequence>